<gene>
    <name evidence="1" type="primary">glpK</name>
    <name type="ordered locus">BCE_1125</name>
</gene>
<feature type="chain" id="PRO_1000020699" description="Glycerol kinase">
    <location>
        <begin position="1"/>
        <end position="510"/>
    </location>
</feature>
<feature type="binding site" evidence="1">
    <location>
        <position position="12"/>
    </location>
    <ligand>
        <name>ADP</name>
        <dbReference type="ChEBI" id="CHEBI:456216"/>
    </ligand>
</feature>
<feature type="binding site" evidence="1">
    <location>
        <position position="12"/>
    </location>
    <ligand>
        <name>ATP</name>
        <dbReference type="ChEBI" id="CHEBI:30616"/>
    </ligand>
</feature>
<feature type="binding site" evidence="1">
    <location>
        <position position="12"/>
    </location>
    <ligand>
        <name>sn-glycerol 3-phosphate</name>
        <dbReference type="ChEBI" id="CHEBI:57597"/>
    </ligand>
</feature>
<feature type="binding site" evidence="1">
    <location>
        <position position="13"/>
    </location>
    <ligand>
        <name>ATP</name>
        <dbReference type="ChEBI" id="CHEBI:30616"/>
    </ligand>
</feature>
<feature type="binding site" evidence="1">
    <location>
        <position position="14"/>
    </location>
    <ligand>
        <name>ATP</name>
        <dbReference type="ChEBI" id="CHEBI:30616"/>
    </ligand>
</feature>
<feature type="binding site" evidence="1">
    <location>
        <position position="16"/>
    </location>
    <ligand>
        <name>ADP</name>
        <dbReference type="ChEBI" id="CHEBI:456216"/>
    </ligand>
</feature>
<feature type="binding site" evidence="1">
    <location>
        <position position="82"/>
    </location>
    <ligand>
        <name>glycerol</name>
        <dbReference type="ChEBI" id="CHEBI:17754"/>
    </ligand>
</feature>
<feature type="binding site" evidence="1">
    <location>
        <position position="82"/>
    </location>
    <ligand>
        <name>sn-glycerol 3-phosphate</name>
        <dbReference type="ChEBI" id="CHEBI:57597"/>
    </ligand>
</feature>
<feature type="binding site" evidence="1">
    <location>
        <position position="83"/>
    </location>
    <ligand>
        <name>glycerol</name>
        <dbReference type="ChEBI" id="CHEBI:17754"/>
    </ligand>
</feature>
<feature type="binding site" evidence="1">
    <location>
        <position position="83"/>
    </location>
    <ligand>
        <name>sn-glycerol 3-phosphate</name>
        <dbReference type="ChEBI" id="CHEBI:57597"/>
    </ligand>
</feature>
<feature type="binding site" evidence="1">
    <location>
        <position position="134"/>
    </location>
    <ligand>
        <name>glycerol</name>
        <dbReference type="ChEBI" id="CHEBI:17754"/>
    </ligand>
</feature>
<feature type="binding site" evidence="1">
    <location>
        <position position="134"/>
    </location>
    <ligand>
        <name>sn-glycerol 3-phosphate</name>
        <dbReference type="ChEBI" id="CHEBI:57597"/>
    </ligand>
</feature>
<feature type="binding site" evidence="1">
    <location>
        <position position="244"/>
    </location>
    <ligand>
        <name>glycerol</name>
        <dbReference type="ChEBI" id="CHEBI:17754"/>
    </ligand>
</feature>
<feature type="binding site" evidence="1">
    <location>
        <position position="244"/>
    </location>
    <ligand>
        <name>sn-glycerol 3-phosphate</name>
        <dbReference type="ChEBI" id="CHEBI:57597"/>
    </ligand>
</feature>
<feature type="binding site" evidence="1">
    <location>
        <position position="245"/>
    </location>
    <ligand>
        <name>glycerol</name>
        <dbReference type="ChEBI" id="CHEBI:17754"/>
    </ligand>
</feature>
<feature type="binding site" evidence="1">
    <location>
        <position position="266"/>
    </location>
    <ligand>
        <name>ADP</name>
        <dbReference type="ChEBI" id="CHEBI:456216"/>
    </ligand>
</feature>
<feature type="binding site" evidence="1">
    <location>
        <position position="266"/>
    </location>
    <ligand>
        <name>ATP</name>
        <dbReference type="ChEBI" id="CHEBI:30616"/>
    </ligand>
</feature>
<feature type="binding site" evidence="1">
    <location>
        <position position="309"/>
    </location>
    <ligand>
        <name>ADP</name>
        <dbReference type="ChEBI" id="CHEBI:456216"/>
    </ligand>
</feature>
<feature type="binding site" evidence="1">
    <location>
        <position position="309"/>
    </location>
    <ligand>
        <name>ATP</name>
        <dbReference type="ChEBI" id="CHEBI:30616"/>
    </ligand>
</feature>
<feature type="binding site" evidence="1">
    <location>
        <position position="313"/>
    </location>
    <ligand>
        <name>ATP</name>
        <dbReference type="ChEBI" id="CHEBI:30616"/>
    </ligand>
</feature>
<feature type="binding site" evidence="1">
    <location>
        <position position="410"/>
    </location>
    <ligand>
        <name>ADP</name>
        <dbReference type="ChEBI" id="CHEBI:456216"/>
    </ligand>
</feature>
<feature type="binding site" evidence="1">
    <location>
        <position position="410"/>
    </location>
    <ligand>
        <name>ATP</name>
        <dbReference type="ChEBI" id="CHEBI:30616"/>
    </ligand>
</feature>
<feature type="binding site" evidence="1">
    <location>
        <position position="414"/>
    </location>
    <ligand>
        <name>ADP</name>
        <dbReference type="ChEBI" id="CHEBI:456216"/>
    </ligand>
</feature>
<feature type="modified residue" description="Phosphohistidine; by HPr" evidence="1">
    <location>
        <position position="230"/>
    </location>
</feature>
<keyword id="KW-0067">ATP-binding</keyword>
<keyword id="KW-0319">Glycerol metabolism</keyword>
<keyword id="KW-0418">Kinase</keyword>
<keyword id="KW-0547">Nucleotide-binding</keyword>
<keyword id="KW-0597">Phosphoprotein</keyword>
<keyword id="KW-0808">Transferase</keyword>
<reference key="1">
    <citation type="journal article" date="2004" name="Nucleic Acids Res.">
        <title>The genome sequence of Bacillus cereus ATCC 10987 reveals metabolic adaptations and a large plasmid related to Bacillus anthracis pXO1.</title>
        <authorList>
            <person name="Rasko D.A."/>
            <person name="Ravel J."/>
            <person name="Oekstad O.A."/>
            <person name="Helgason E."/>
            <person name="Cer R.Z."/>
            <person name="Jiang L."/>
            <person name="Shores K.A."/>
            <person name="Fouts D.E."/>
            <person name="Tourasse N.J."/>
            <person name="Angiuoli S.V."/>
            <person name="Kolonay J.F."/>
            <person name="Nelson W.C."/>
            <person name="Kolstoe A.-B."/>
            <person name="Fraser C.M."/>
            <person name="Read T.D."/>
        </authorList>
    </citation>
    <scope>NUCLEOTIDE SEQUENCE [LARGE SCALE GENOMIC DNA]</scope>
    <source>
        <strain>ATCC 10987 / NRS 248</strain>
    </source>
</reference>
<protein>
    <recommendedName>
        <fullName evidence="1">Glycerol kinase</fullName>
        <ecNumber evidence="1">2.7.1.30</ecNumber>
    </recommendedName>
    <alternativeName>
        <fullName evidence="1">ATP:glycerol 3-phosphotransferase</fullName>
    </alternativeName>
    <alternativeName>
        <fullName evidence="1">Glycerokinase</fullName>
        <shortName evidence="1">GK</shortName>
    </alternativeName>
</protein>
<evidence type="ECO:0000255" key="1">
    <source>
        <dbReference type="HAMAP-Rule" id="MF_00186"/>
    </source>
</evidence>
<comment type="function">
    <text evidence="1">Key enzyme in the regulation of glycerol uptake and metabolism. Catalyzes the phosphorylation of glycerol to yield sn-glycerol 3-phosphate.</text>
</comment>
<comment type="catalytic activity">
    <reaction evidence="1">
        <text>glycerol + ATP = sn-glycerol 3-phosphate + ADP + H(+)</text>
        <dbReference type="Rhea" id="RHEA:21644"/>
        <dbReference type="ChEBI" id="CHEBI:15378"/>
        <dbReference type="ChEBI" id="CHEBI:17754"/>
        <dbReference type="ChEBI" id="CHEBI:30616"/>
        <dbReference type="ChEBI" id="CHEBI:57597"/>
        <dbReference type="ChEBI" id="CHEBI:456216"/>
        <dbReference type="EC" id="2.7.1.30"/>
    </reaction>
</comment>
<comment type="activity regulation">
    <text evidence="1">Activated by phosphorylation and inhibited by fructose 1,6-bisphosphate (FBP).</text>
</comment>
<comment type="pathway">
    <text evidence="1">Polyol metabolism; glycerol degradation via glycerol kinase pathway; sn-glycerol 3-phosphate from glycerol: step 1/1.</text>
</comment>
<comment type="subunit">
    <text evidence="1">Homotetramer and homodimer (in equilibrium).</text>
</comment>
<comment type="PTM">
    <text evidence="1">The phosphoenolpyruvate-dependent sugar phosphotransferase system (PTS), including enzyme I, and histidine-containing protein (HPr) are required for the phosphorylation, which leads to the activation of the enzyme.</text>
</comment>
<comment type="similarity">
    <text evidence="1">Belongs to the FGGY kinase family.</text>
</comment>
<sequence>MKKYILSLDQGTTSSRAILXNKKGEIVHSAQKEFTQHFPKPGWVEHNAQEIWGSILAVIATCLSEADVKPEQIAGIGITNQRETAVVWDKTTGKPIYNAIVWQSRQTAEICDELKEKGYGEMVREKTGLLIDAYFSGTKVKWILDNVEGAREKAENGDLLFGTIDTWLVWKLSGGKAHVTDYSNASRTLMFNIHDLQWDDELLDMLTVPKSMLPEVRPSSEVYGETIDYHFFGQNVPIAGVAGDQQAALFGQACFGEGMAKNTYGTGCFMLMNTGEKAVASEHGLLTTIAWGIDGKVNYALEGSIFVAGSAIQWLRDGMRMFKDASESEVYANRVESTDGVYVVPAFVGLGTPYWDSEVRGAMFGVTRGTTKEHFIRATLESLAYQXKDVLCAMEADSGIELKTLRVDGGAVKNNFLMKFQSDILDVPVERPVINETTALGAAYLAGLAVGYWKNQDEIKEQWHMDKRLNQQWKRKQAKSYMLDGKKQLKQQKLSNNHKQCYNGDKLIIR</sequence>
<proteinExistence type="inferred from homology"/>
<organism>
    <name type="scientific">Bacillus cereus (strain ATCC 10987 / NRS 248)</name>
    <dbReference type="NCBI Taxonomy" id="222523"/>
    <lineage>
        <taxon>Bacteria</taxon>
        <taxon>Bacillati</taxon>
        <taxon>Bacillota</taxon>
        <taxon>Bacilli</taxon>
        <taxon>Bacillales</taxon>
        <taxon>Bacillaceae</taxon>
        <taxon>Bacillus</taxon>
        <taxon>Bacillus cereus group</taxon>
    </lineage>
</organism>
<accession>Q73CE0</accession>
<dbReference type="EC" id="2.7.1.30" evidence="1"/>
<dbReference type="EMBL" id="AE017194">
    <property type="protein sequence ID" value="AAS40056.1"/>
    <property type="molecule type" value="Genomic_DNA"/>
</dbReference>
<dbReference type="KEGG" id="bca:BCE_1125"/>
<dbReference type="HOGENOM" id="CLU_009281_2_3_9"/>
<dbReference type="UniPathway" id="UPA00618">
    <property type="reaction ID" value="UER00672"/>
</dbReference>
<dbReference type="Proteomes" id="UP000002527">
    <property type="component" value="Chromosome"/>
</dbReference>
<dbReference type="GO" id="GO:0005829">
    <property type="term" value="C:cytosol"/>
    <property type="evidence" value="ECO:0007669"/>
    <property type="project" value="TreeGrafter"/>
</dbReference>
<dbReference type="GO" id="GO:0005524">
    <property type="term" value="F:ATP binding"/>
    <property type="evidence" value="ECO:0007669"/>
    <property type="project" value="UniProtKB-UniRule"/>
</dbReference>
<dbReference type="GO" id="GO:0004370">
    <property type="term" value="F:glycerol kinase activity"/>
    <property type="evidence" value="ECO:0000250"/>
    <property type="project" value="UniProtKB"/>
</dbReference>
<dbReference type="GO" id="GO:0019563">
    <property type="term" value="P:glycerol catabolic process"/>
    <property type="evidence" value="ECO:0007669"/>
    <property type="project" value="UniProtKB-UniRule"/>
</dbReference>
<dbReference type="GO" id="GO:0006071">
    <property type="term" value="P:glycerol metabolic process"/>
    <property type="evidence" value="ECO:0000250"/>
    <property type="project" value="UniProtKB"/>
</dbReference>
<dbReference type="GO" id="GO:0006072">
    <property type="term" value="P:glycerol-3-phosphate metabolic process"/>
    <property type="evidence" value="ECO:0007669"/>
    <property type="project" value="InterPro"/>
</dbReference>
<dbReference type="CDD" id="cd07786">
    <property type="entry name" value="FGGY_EcGK_like"/>
    <property type="match status" value="1"/>
</dbReference>
<dbReference type="FunFam" id="3.30.420.40:FF:000007">
    <property type="entry name" value="Glycerol kinase"/>
    <property type="match status" value="1"/>
</dbReference>
<dbReference type="FunFam" id="3.30.420.40:FF:000008">
    <property type="entry name" value="Glycerol kinase"/>
    <property type="match status" value="1"/>
</dbReference>
<dbReference type="Gene3D" id="3.30.420.40">
    <property type="match status" value="2"/>
</dbReference>
<dbReference type="HAMAP" id="MF_00186">
    <property type="entry name" value="Glycerol_kin"/>
    <property type="match status" value="1"/>
</dbReference>
<dbReference type="InterPro" id="IPR043129">
    <property type="entry name" value="ATPase_NBD"/>
</dbReference>
<dbReference type="InterPro" id="IPR000577">
    <property type="entry name" value="Carb_kinase_FGGY"/>
</dbReference>
<dbReference type="InterPro" id="IPR018483">
    <property type="entry name" value="Carb_kinase_FGGY_CS"/>
</dbReference>
<dbReference type="InterPro" id="IPR018485">
    <property type="entry name" value="FGGY_C"/>
</dbReference>
<dbReference type="InterPro" id="IPR018484">
    <property type="entry name" value="FGGY_N"/>
</dbReference>
<dbReference type="InterPro" id="IPR005999">
    <property type="entry name" value="Glycerol_kin"/>
</dbReference>
<dbReference type="NCBIfam" id="TIGR01311">
    <property type="entry name" value="glycerol_kin"/>
    <property type="match status" value="1"/>
</dbReference>
<dbReference type="NCBIfam" id="NF000756">
    <property type="entry name" value="PRK00047.1"/>
    <property type="match status" value="1"/>
</dbReference>
<dbReference type="PANTHER" id="PTHR10196:SF69">
    <property type="entry name" value="GLYCEROL KINASE"/>
    <property type="match status" value="1"/>
</dbReference>
<dbReference type="PANTHER" id="PTHR10196">
    <property type="entry name" value="SUGAR KINASE"/>
    <property type="match status" value="1"/>
</dbReference>
<dbReference type="Pfam" id="PF02782">
    <property type="entry name" value="FGGY_C"/>
    <property type="match status" value="1"/>
</dbReference>
<dbReference type="Pfam" id="PF00370">
    <property type="entry name" value="FGGY_N"/>
    <property type="match status" value="1"/>
</dbReference>
<dbReference type="PIRSF" id="PIRSF000538">
    <property type="entry name" value="GlpK"/>
    <property type="match status" value="1"/>
</dbReference>
<dbReference type="SUPFAM" id="SSF53067">
    <property type="entry name" value="Actin-like ATPase domain"/>
    <property type="match status" value="2"/>
</dbReference>
<dbReference type="PROSITE" id="PS00933">
    <property type="entry name" value="FGGY_KINASES_1"/>
    <property type="match status" value="1"/>
</dbReference>
<dbReference type="PROSITE" id="PS00445">
    <property type="entry name" value="FGGY_KINASES_2"/>
    <property type="match status" value="1"/>
</dbReference>
<name>GLPK_BACC1</name>